<feature type="chain" id="PRO_0000363326" description="Probable protein phosphatase 2C BIPP2C1">
    <location>
        <begin position="1"/>
        <end position="569"/>
    </location>
</feature>
<feature type="domain" description="PPM-type phosphatase" evidence="2">
    <location>
        <begin position="329"/>
        <end position="564"/>
    </location>
</feature>
<feature type="region of interest" description="Disordered" evidence="3">
    <location>
        <begin position="166"/>
        <end position="212"/>
    </location>
</feature>
<feature type="region of interest" description="Disordered" evidence="3">
    <location>
        <begin position="251"/>
        <end position="279"/>
    </location>
</feature>
<feature type="compositionally biased region" description="Low complexity" evidence="3">
    <location>
        <begin position="174"/>
        <end position="183"/>
    </location>
</feature>
<feature type="binding site" evidence="1">
    <location>
        <position position="358"/>
    </location>
    <ligand>
        <name>Mn(2+)</name>
        <dbReference type="ChEBI" id="CHEBI:29035"/>
        <label>1</label>
    </ligand>
</feature>
<feature type="binding site" evidence="1">
    <location>
        <position position="358"/>
    </location>
    <ligand>
        <name>Mn(2+)</name>
        <dbReference type="ChEBI" id="CHEBI:29035"/>
        <label>2</label>
    </ligand>
</feature>
<feature type="binding site" evidence="1">
    <location>
        <position position="359"/>
    </location>
    <ligand>
        <name>Mn(2+)</name>
        <dbReference type="ChEBI" id="CHEBI:29035"/>
        <label>1</label>
    </ligand>
</feature>
<feature type="binding site" evidence="1">
    <location>
        <position position="488"/>
    </location>
    <ligand>
        <name>Mn(2+)</name>
        <dbReference type="ChEBI" id="CHEBI:29035"/>
        <label>2</label>
    </ligand>
</feature>
<feature type="binding site" evidence="1">
    <location>
        <position position="555"/>
    </location>
    <ligand>
        <name>Mn(2+)</name>
        <dbReference type="ChEBI" id="CHEBI:29035"/>
        <label>2</label>
    </ligand>
</feature>
<feature type="splice variant" id="VSP_036283" description="In isoform 2." evidence="5">
    <original>MDEEARAAGCSPAPPRAPAASCGAAAELCLCSPTGV</original>
    <variation>MKRRAPPDAPQRRPARRLLPVALPPSSASAPLQVWVRGIHACLISFGFGSRFDLVLVWFGVGLDA</variation>
    <location>
        <begin position="1"/>
        <end position="36"/>
    </location>
</feature>
<feature type="splice variant" id="VSP_036284" description="In isoform 3." evidence="5">
    <location>
        <begin position="35"/>
        <end position="36"/>
    </location>
</feature>
<feature type="splice variant" id="VSP_036285" description="In isoform 4." evidence="5">
    <location>
        <begin position="121"/>
        <end position="256"/>
    </location>
</feature>
<accession>Q6J2K6</accession>
<evidence type="ECO:0000250" key="1"/>
<evidence type="ECO:0000255" key="2">
    <source>
        <dbReference type="PROSITE-ProRule" id="PRU01082"/>
    </source>
</evidence>
<evidence type="ECO:0000256" key="3">
    <source>
        <dbReference type="SAM" id="MobiDB-lite"/>
    </source>
</evidence>
<evidence type="ECO:0000269" key="4">
    <source ref="1"/>
</evidence>
<evidence type="ECO:0000305" key="5"/>
<protein>
    <recommendedName>
        <fullName>Probable protein phosphatase 2C BIPP2C1</fullName>
        <ecNumber>3.1.3.16</ecNumber>
    </recommendedName>
    <alternativeName>
        <fullName>BTH-induced protein phosphatase 2C 1</fullName>
        <shortName>OsBIPP2C1</shortName>
    </alternativeName>
</protein>
<keyword id="KW-0025">Alternative splicing</keyword>
<keyword id="KW-0378">Hydrolase</keyword>
<keyword id="KW-0460">Magnesium</keyword>
<keyword id="KW-0464">Manganese</keyword>
<keyword id="KW-0479">Metal-binding</keyword>
<keyword id="KW-0904">Protein phosphatase</keyword>
<gene>
    <name type="primary">BIPP2C1</name>
</gene>
<name>BIP2C_ORYSI</name>
<proteinExistence type="evidence at transcript level"/>
<dbReference type="EC" id="3.1.3.16"/>
<dbReference type="EMBL" id="AY603974">
    <property type="protein sequence ID" value="AAT35116.1"/>
    <property type="molecule type" value="mRNA"/>
</dbReference>
<dbReference type="SMR" id="Q6J2K6"/>
<dbReference type="GO" id="GO:0046872">
    <property type="term" value="F:metal ion binding"/>
    <property type="evidence" value="ECO:0007669"/>
    <property type="project" value="UniProtKB-KW"/>
</dbReference>
<dbReference type="GO" id="GO:0004722">
    <property type="term" value="F:protein serine/threonine phosphatase activity"/>
    <property type="evidence" value="ECO:0007669"/>
    <property type="project" value="UniProtKB-EC"/>
</dbReference>
<dbReference type="Gene3D" id="3.60.40.10">
    <property type="entry name" value="PPM-type phosphatase domain"/>
    <property type="match status" value="2"/>
</dbReference>
<dbReference type="InterPro" id="IPR036457">
    <property type="entry name" value="PPM-type-like_dom_sf"/>
</dbReference>
<dbReference type="InterPro" id="IPR001932">
    <property type="entry name" value="PPM-type_phosphatase-like_dom"/>
</dbReference>
<dbReference type="InterPro" id="IPR039123">
    <property type="entry name" value="PPTC7"/>
</dbReference>
<dbReference type="PANTHER" id="PTHR12320">
    <property type="entry name" value="PROTEIN PHOSPHATASE 2C"/>
    <property type="match status" value="1"/>
</dbReference>
<dbReference type="PANTHER" id="PTHR12320:SF52">
    <property type="entry name" value="PROTEIN PHOSPHATASE 2C BIPP2C1-RELATED"/>
    <property type="match status" value="1"/>
</dbReference>
<dbReference type="Pfam" id="PF13672">
    <property type="entry name" value="PP2C_2"/>
    <property type="match status" value="1"/>
</dbReference>
<dbReference type="SMART" id="SM00331">
    <property type="entry name" value="PP2C_SIG"/>
    <property type="match status" value="1"/>
</dbReference>
<dbReference type="SMART" id="SM00332">
    <property type="entry name" value="PP2Cc"/>
    <property type="match status" value="1"/>
</dbReference>
<dbReference type="SUPFAM" id="SSF81606">
    <property type="entry name" value="PP2C-like"/>
    <property type="match status" value="1"/>
</dbReference>
<dbReference type="PROSITE" id="PS51746">
    <property type="entry name" value="PPM_2"/>
    <property type="match status" value="1"/>
</dbReference>
<sequence>MDEEARAAGCSPAPPRAPAASCGAAAELCLCSPTGVEGIEQVPGCPCFEDAGAVVVSGEAPEGPGVLCSGDGAELKLAEQGALDVRLGSPAVGIHEQQLLHRGTSGSDEAGAINEISPVEVSPSEASSNLDTAGAIGGSPLMLESLPETSDTRGCEQEVMPGVVVGSSNRDASSEVGVESECGSDADGRNGLGEGELVSSVDGGGAEKSSKVTGVLSEEGVDGMETALEPCVASVGSITQVEEGVDRMETSLDDSEASDGSTTQDFDTDVETESSGSSIEEQDMGYGVHIPHTEQAICEVARGNKSSEVKSSDRMSSVTLPTLILASGAAMLPHPSKVLTGGEDAYFIACDGWFGVADGVGQWSFEGINAGLYARELMDGCKKAVMESQGAPEMRTEEVLAKAADEARSPGSSTVLVAHFDGQVLHACNIGDSGFLVIRNGEIYQKSKPMTYGFNFPLQIEKGDDPFKLVQKYTIDLQEGDAIVTATDGLFDNVYEEEIAAVISKSLEAGLKPSEIAEFLVARAKEVGRSATCRSPFSDAALAVGYLGYSGGKLDDVTVVVSVVRKSEV</sequence>
<reference key="1">
    <citation type="journal article" date="2006" name="Physiol. Plantarum">
        <title>Molecular characterization and expression analysis of a rice protein phosphatase 2C gene, OsBIPP2C1, and overexpression in transgenic tobacco conferred enhanced disease resistance and abiotic tolerance.</title>
        <authorList>
            <person name="Hu X."/>
            <person name="Song F."/>
            <person name="Zheng Z."/>
        </authorList>
        <dbReference type="AGRICOLA" id="IND43812072"/>
    </citation>
    <scope>NUCLEOTIDE SEQUENCE [MRNA] (ISOFORM 1)</scope>
    <scope>FUNCTION</scope>
    <scope>INDUCTION</scope>
    <source>
        <strain>cv. Yuanfengzao</strain>
        <tissue>Seedling</tissue>
    </source>
</reference>
<comment type="function">
    <text evidence="4">May play a role in responses to biotic and abiotic stresses.</text>
</comment>
<comment type="catalytic activity">
    <reaction>
        <text>O-phospho-L-seryl-[protein] + H2O = L-seryl-[protein] + phosphate</text>
        <dbReference type="Rhea" id="RHEA:20629"/>
        <dbReference type="Rhea" id="RHEA-COMP:9863"/>
        <dbReference type="Rhea" id="RHEA-COMP:11604"/>
        <dbReference type="ChEBI" id="CHEBI:15377"/>
        <dbReference type="ChEBI" id="CHEBI:29999"/>
        <dbReference type="ChEBI" id="CHEBI:43474"/>
        <dbReference type="ChEBI" id="CHEBI:83421"/>
        <dbReference type="EC" id="3.1.3.16"/>
    </reaction>
</comment>
<comment type="catalytic activity">
    <reaction>
        <text>O-phospho-L-threonyl-[protein] + H2O = L-threonyl-[protein] + phosphate</text>
        <dbReference type="Rhea" id="RHEA:47004"/>
        <dbReference type="Rhea" id="RHEA-COMP:11060"/>
        <dbReference type="Rhea" id="RHEA-COMP:11605"/>
        <dbReference type="ChEBI" id="CHEBI:15377"/>
        <dbReference type="ChEBI" id="CHEBI:30013"/>
        <dbReference type="ChEBI" id="CHEBI:43474"/>
        <dbReference type="ChEBI" id="CHEBI:61977"/>
        <dbReference type="EC" id="3.1.3.16"/>
    </reaction>
</comment>
<comment type="cofactor">
    <cofactor evidence="1">
        <name>Mg(2+)</name>
        <dbReference type="ChEBI" id="CHEBI:18420"/>
    </cofactor>
    <cofactor evidence="1">
        <name>Mn(2+)</name>
        <dbReference type="ChEBI" id="CHEBI:29035"/>
    </cofactor>
    <text evidence="1">Binds 2 magnesium or manganese ions per subunit.</text>
</comment>
<comment type="alternative products">
    <event type="alternative splicing"/>
    <isoform>
        <id>Q6J2K6-1</id>
        <name>1</name>
        <sequence type="displayed"/>
    </isoform>
    <isoform>
        <id>Q6J2K6-2</id>
        <name>2</name>
        <sequence type="described" ref="VSP_036283"/>
    </isoform>
    <isoform>
        <id>Q6J2K6-3</id>
        <name>3</name>
        <sequence type="described" ref="VSP_036284"/>
    </isoform>
    <isoform>
        <id>Q6J2K6-4</id>
        <name>4</name>
        <sequence type="described" ref="VSP_036285"/>
    </isoform>
</comment>
<comment type="induction">
    <text evidence="4">By salicylic acid (SA), benzothiadiazole (BTH), hydrogen peroxide, abscisic acid (ABA), wounding, salt, cold and osmotic stresses.</text>
</comment>
<comment type="miscellaneous">
    <molecule>Isoform 3</molecule>
    <text evidence="5">May be due to a competing donor splice site.</text>
</comment>
<comment type="similarity">
    <text evidence="5">Belongs to the PP2C family.</text>
</comment>
<organism>
    <name type="scientific">Oryza sativa subsp. indica</name>
    <name type="common">Rice</name>
    <dbReference type="NCBI Taxonomy" id="39946"/>
    <lineage>
        <taxon>Eukaryota</taxon>
        <taxon>Viridiplantae</taxon>
        <taxon>Streptophyta</taxon>
        <taxon>Embryophyta</taxon>
        <taxon>Tracheophyta</taxon>
        <taxon>Spermatophyta</taxon>
        <taxon>Magnoliopsida</taxon>
        <taxon>Liliopsida</taxon>
        <taxon>Poales</taxon>
        <taxon>Poaceae</taxon>
        <taxon>BOP clade</taxon>
        <taxon>Oryzoideae</taxon>
        <taxon>Oryzeae</taxon>
        <taxon>Oryzinae</taxon>
        <taxon>Oryza</taxon>
        <taxon>Oryza sativa</taxon>
    </lineage>
</organism>